<name>ACP_HALH5</name>
<protein>
    <recommendedName>
        <fullName evidence="1">Acyl carrier protein</fullName>
        <shortName evidence="1">ACP</shortName>
    </recommendedName>
</protein>
<evidence type="ECO:0000255" key="1">
    <source>
        <dbReference type="HAMAP-Rule" id="MF_01217"/>
    </source>
</evidence>
<evidence type="ECO:0000255" key="2">
    <source>
        <dbReference type="PROSITE-ProRule" id="PRU00258"/>
    </source>
</evidence>
<reference key="1">
    <citation type="journal article" date="2000" name="Nucleic Acids Res.">
        <title>Complete genome sequence of the alkaliphilic bacterium Bacillus halodurans and genomic sequence comparison with Bacillus subtilis.</title>
        <authorList>
            <person name="Takami H."/>
            <person name="Nakasone K."/>
            <person name="Takaki Y."/>
            <person name="Maeno G."/>
            <person name="Sasaki R."/>
            <person name="Masui N."/>
            <person name="Fuji F."/>
            <person name="Hirama C."/>
            <person name="Nakamura Y."/>
            <person name="Ogasawara N."/>
            <person name="Kuhara S."/>
            <person name="Horikoshi K."/>
        </authorList>
    </citation>
    <scope>NUCLEOTIDE SEQUENCE [LARGE SCALE GENOMIC DNA]</scope>
    <source>
        <strain>ATCC BAA-125 / DSM 18197 / FERM 7344 / JCM 9153 / C-125</strain>
    </source>
</reference>
<proteinExistence type="inferred from homology"/>
<accession>Q9KA04</accession>
<dbReference type="EMBL" id="BA000004">
    <property type="protein sequence ID" value="BAB06209.1"/>
    <property type="molecule type" value="Genomic_DNA"/>
</dbReference>
<dbReference type="PIR" id="B83961">
    <property type="entry name" value="B83961"/>
</dbReference>
<dbReference type="RefSeq" id="WP_010898641.1">
    <property type="nucleotide sequence ID" value="NC_002570.2"/>
</dbReference>
<dbReference type="SMR" id="Q9KA04"/>
<dbReference type="STRING" id="272558.gene:10728388"/>
<dbReference type="GeneID" id="87598009"/>
<dbReference type="KEGG" id="bha:BH2490"/>
<dbReference type="eggNOG" id="COG0236">
    <property type="taxonomic scope" value="Bacteria"/>
</dbReference>
<dbReference type="HOGENOM" id="CLU_108696_5_3_9"/>
<dbReference type="OrthoDB" id="9804551at2"/>
<dbReference type="UniPathway" id="UPA00094"/>
<dbReference type="Proteomes" id="UP000001258">
    <property type="component" value="Chromosome"/>
</dbReference>
<dbReference type="GO" id="GO:0005829">
    <property type="term" value="C:cytosol"/>
    <property type="evidence" value="ECO:0007669"/>
    <property type="project" value="TreeGrafter"/>
</dbReference>
<dbReference type="GO" id="GO:0016020">
    <property type="term" value="C:membrane"/>
    <property type="evidence" value="ECO:0007669"/>
    <property type="project" value="GOC"/>
</dbReference>
<dbReference type="GO" id="GO:0000035">
    <property type="term" value="F:acyl binding"/>
    <property type="evidence" value="ECO:0007669"/>
    <property type="project" value="TreeGrafter"/>
</dbReference>
<dbReference type="GO" id="GO:0000036">
    <property type="term" value="F:acyl carrier activity"/>
    <property type="evidence" value="ECO:0007669"/>
    <property type="project" value="UniProtKB-UniRule"/>
</dbReference>
<dbReference type="GO" id="GO:0031177">
    <property type="term" value="F:phosphopantetheine binding"/>
    <property type="evidence" value="ECO:0007669"/>
    <property type="project" value="InterPro"/>
</dbReference>
<dbReference type="GO" id="GO:0009245">
    <property type="term" value="P:lipid A biosynthetic process"/>
    <property type="evidence" value="ECO:0007669"/>
    <property type="project" value="TreeGrafter"/>
</dbReference>
<dbReference type="FunFam" id="1.10.1200.10:FF:000001">
    <property type="entry name" value="Acyl carrier protein"/>
    <property type="match status" value="1"/>
</dbReference>
<dbReference type="Gene3D" id="1.10.1200.10">
    <property type="entry name" value="ACP-like"/>
    <property type="match status" value="1"/>
</dbReference>
<dbReference type="HAMAP" id="MF_01217">
    <property type="entry name" value="Acyl_carrier"/>
    <property type="match status" value="1"/>
</dbReference>
<dbReference type="InterPro" id="IPR003231">
    <property type="entry name" value="ACP"/>
</dbReference>
<dbReference type="InterPro" id="IPR036736">
    <property type="entry name" value="ACP-like_sf"/>
</dbReference>
<dbReference type="InterPro" id="IPR020806">
    <property type="entry name" value="PKS_PP-bd"/>
</dbReference>
<dbReference type="InterPro" id="IPR009081">
    <property type="entry name" value="PP-bd_ACP"/>
</dbReference>
<dbReference type="InterPro" id="IPR006162">
    <property type="entry name" value="Ppantetheine_attach_site"/>
</dbReference>
<dbReference type="NCBIfam" id="TIGR00517">
    <property type="entry name" value="acyl_carrier"/>
    <property type="match status" value="1"/>
</dbReference>
<dbReference type="NCBIfam" id="NF002148">
    <property type="entry name" value="PRK00982.1-2"/>
    <property type="match status" value="1"/>
</dbReference>
<dbReference type="NCBIfam" id="NF002149">
    <property type="entry name" value="PRK00982.1-3"/>
    <property type="match status" value="1"/>
</dbReference>
<dbReference type="NCBIfam" id="NF002150">
    <property type="entry name" value="PRK00982.1-4"/>
    <property type="match status" value="1"/>
</dbReference>
<dbReference type="NCBIfam" id="NF002151">
    <property type="entry name" value="PRK00982.1-5"/>
    <property type="match status" value="1"/>
</dbReference>
<dbReference type="PANTHER" id="PTHR20863">
    <property type="entry name" value="ACYL CARRIER PROTEIN"/>
    <property type="match status" value="1"/>
</dbReference>
<dbReference type="PANTHER" id="PTHR20863:SF76">
    <property type="entry name" value="CARRIER DOMAIN-CONTAINING PROTEIN"/>
    <property type="match status" value="1"/>
</dbReference>
<dbReference type="Pfam" id="PF00550">
    <property type="entry name" value="PP-binding"/>
    <property type="match status" value="1"/>
</dbReference>
<dbReference type="SMART" id="SM00823">
    <property type="entry name" value="PKS_PP"/>
    <property type="match status" value="1"/>
</dbReference>
<dbReference type="SUPFAM" id="SSF47336">
    <property type="entry name" value="ACP-like"/>
    <property type="match status" value="1"/>
</dbReference>
<dbReference type="PROSITE" id="PS50075">
    <property type="entry name" value="CARRIER"/>
    <property type="match status" value="1"/>
</dbReference>
<dbReference type="PROSITE" id="PS00012">
    <property type="entry name" value="PHOSPHOPANTETHEINE"/>
    <property type="match status" value="1"/>
</dbReference>
<comment type="function">
    <text evidence="1">Carrier of the growing fatty acid chain in fatty acid biosynthesis.</text>
</comment>
<comment type="pathway">
    <text evidence="1">Lipid metabolism; fatty acid biosynthesis.</text>
</comment>
<comment type="subcellular location">
    <subcellularLocation>
        <location evidence="1">Cytoplasm</location>
    </subcellularLocation>
</comment>
<comment type="PTM">
    <text evidence="1">4'-phosphopantetheine is transferred from CoA to a specific serine of apo-ACP by AcpS. This modification is essential for activity because fatty acids are bound in thioester linkage to the sulfhydryl of the prosthetic group.</text>
</comment>
<comment type="similarity">
    <text evidence="1">Belongs to the acyl carrier protein (ACP) family.</text>
</comment>
<sequence length="77" mass="8558">MADTLSRITKIVVDRLGVDEAEVKPEASFKDDLGADSLDVVELVMELEDEFDLEISDEEAEKIATVADVVEYIEGRQ</sequence>
<gene>
    <name evidence="1" type="primary">acpP</name>
    <name type="synonym">acpA</name>
    <name type="ordered locus">BH2490</name>
</gene>
<organism>
    <name type="scientific">Halalkalibacterium halodurans (strain ATCC BAA-125 / DSM 18197 / FERM 7344 / JCM 9153 / C-125)</name>
    <name type="common">Bacillus halodurans</name>
    <dbReference type="NCBI Taxonomy" id="272558"/>
    <lineage>
        <taxon>Bacteria</taxon>
        <taxon>Bacillati</taxon>
        <taxon>Bacillota</taxon>
        <taxon>Bacilli</taxon>
        <taxon>Bacillales</taxon>
        <taxon>Bacillaceae</taxon>
        <taxon>Halalkalibacterium (ex Joshi et al. 2022)</taxon>
    </lineage>
</organism>
<keyword id="KW-0963">Cytoplasm</keyword>
<keyword id="KW-0275">Fatty acid biosynthesis</keyword>
<keyword id="KW-0276">Fatty acid metabolism</keyword>
<keyword id="KW-0444">Lipid biosynthesis</keyword>
<keyword id="KW-0443">Lipid metabolism</keyword>
<keyword id="KW-0596">Phosphopantetheine</keyword>
<keyword id="KW-0597">Phosphoprotein</keyword>
<keyword id="KW-1185">Reference proteome</keyword>
<feature type="chain" id="PRO_0000180101" description="Acyl carrier protein">
    <location>
        <begin position="1"/>
        <end position="77"/>
    </location>
</feature>
<feature type="domain" description="Carrier" evidence="2">
    <location>
        <begin position="2"/>
        <end position="77"/>
    </location>
</feature>
<feature type="modified residue" description="O-(pantetheine 4'-phosphoryl)serine" evidence="2">
    <location>
        <position position="37"/>
    </location>
</feature>